<reference key="1">
    <citation type="journal article" date="2005" name="Genome Res.">
        <title>Genome sequence of Blochmannia pennsylvanicus indicates parallel evolutionary trends among bacterial mutualists of insects.</title>
        <authorList>
            <person name="Degnan P.H."/>
            <person name="Lazarus A.B."/>
            <person name="Wernegreen J.J."/>
        </authorList>
    </citation>
    <scope>NUCLEOTIDE SEQUENCE [LARGE SCALE GENOMIC DNA]</scope>
    <source>
        <strain>BPEN</strain>
    </source>
</reference>
<gene>
    <name evidence="1" type="primary">folD</name>
    <name type="ordered locus">BPEN_313</name>
</gene>
<protein>
    <recommendedName>
        <fullName evidence="1">Bifunctional protein FolD</fullName>
    </recommendedName>
    <domain>
        <recommendedName>
            <fullName evidence="1">Methylenetetrahydrofolate dehydrogenase</fullName>
            <ecNumber evidence="1">1.5.1.5</ecNumber>
        </recommendedName>
    </domain>
    <domain>
        <recommendedName>
            <fullName evidence="1">Methenyltetrahydrofolate cyclohydrolase</fullName>
            <ecNumber evidence="1">3.5.4.9</ecNumber>
        </recommendedName>
    </domain>
</protein>
<evidence type="ECO:0000255" key="1">
    <source>
        <dbReference type="HAMAP-Rule" id="MF_01576"/>
    </source>
</evidence>
<dbReference type="EC" id="1.5.1.5" evidence="1"/>
<dbReference type="EC" id="3.5.4.9" evidence="1"/>
<dbReference type="EMBL" id="CP000016">
    <property type="protein sequence ID" value="AAZ40944.1"/>
    <property type="molecule type" value="Genomic_DNA"/>
</dbReference>
<dbReference type="RefSeq" id="WP_011282851.1">
    <property type="nucleotide sequence ID" value="NC_007292.1"/>
</dbReference>
<dbReference type="SMR" id="Q493A0"/>
<dbReference type="STRING" id="291272.BPEN_313"/>
<dbReference type="KEGG" id="bpn:BPEN_313"/>
<dbReference type="eggNOG" id="COG0190">
    <property type="taxonomic scope" value="Bacteria"/>
</dbReference>
<dbReference type="HOGENOM" id="CLU_034045_2_1_6"/>
<dbReference type="OrthoDB" id="9803580at2"/>
<dbReference type="UniPathway" id="UPA00193"/>
<dbReference type="Proteomes" id="UP000007794">
    <property type="component" value="Chromosome"/>
</dbReference>
<dbReference type="GO" id="GO:0005829">
    <property type="term" value="C:cytosol"/>
    <property type="evidence" value="ECO:0007669"/>
    <property type="project" value="TreeGrafter"/>
</dbReference>
<dbReference type="GO" id="GO:0004477">
    <property type="term" value="F:methenyltetrahydrofolate cyclohydrolase activity"/>
    <property type="evidence" value="ECO:0007669"/>
    <property type="project" value="UniProtKB-UniRule"/>
</dbReference>
<dbReference type="GO" id="GO:0004488">
    <property type="term" value="F:methylenetetrahydrofolate dehydrogenase (NADP+) activity"/>
    <property type="evidence" value="ECO:0007669"/>
    <property type="project" value="UniProtKB-UniRule"/>
</dbReference>
<dbReference type="GO" id="GO:0000105">
    <property type="term" value="P:L-histidine biosynthetic process"/>
    <property type="evidence" value="ECO:0007669"/>
    <property type="project" value="UniProtKB-KW"/>
</dbReference>
<dbReference type="GO" id="GO:0009086">
    <property type="term" value="P:methionine biosynthetic process"/>
    <property type="evidence" value="ECO:0007669"/>
    <property type="project" value="UniProtKB-KW"/>
</dbReference>
<dbReference type="GO" id="GO:0006164">
    <property type="term" value="P:purine nucleotide biosynthetic process"/>
    <property type="evidence" value="ECO:0007669"/>
    <property type="project" value="UniProtKB-KW"/>
</dbReference>
<dbReference type="GO" id="GO:0035999">
    <property type="term" value="P:tetrahydrofolate interconversion"/>
    <property type="evidence" value="ECO:0007669"/>
    <property type="project" value="UniProtKB-UniRule"/>
</dbReference>
<dbReference type="CDD" id="cd01080">
    <property type="entry name" value="NAD_bind_m-THF_DH_Cyclohyd"/>
    <property type="match status" value="1"/>
</dbReference>
<dbReference type="FunFam" id="3.40.50.720:FF:000006">
    <property type="entry name" value="Bifunctional protein FolD"/>
    <property type="match status" value="1"/>
</dbReference>
<dbReference type="FunFam" id="3.40.50.10860:FF:000005">
    <property type="entry name" value="C-1-tetrahydrofolate synthase, cytoplasmic, putative"/>
    <property type="match status" value="1"/>
</dbReference>
<dbReference type="Gene3D" id="3.40.50.10860">
    <property type="entry name" value="Leucine Dehydrogenase, chain A, domain 1"/>
    <property type="match status" value="1"/>
</dbReference>
<dbReference type="Gene3D" id="3.40.50.720">
    <property type="entry name" value="NAD(P)-binding Rossmann-like Domain"/>
    <property type="match status" value="1"/>
</dbReference>
<dbReference type="HAMAP" id="MF_01576">
    <property type="entry name" value="THF_DHG_CYH"/>
    <property type="match status" value="1"/>
</dbReference>
<dbReference type="InterPro" id="IPR046346">
    <property type="entry name" value="Aminoacid_DH-like_N_sf"/>
</dbReference>
<dbReference type="InterPro" id="IPR036291">
    <property type="entry name" value="NAD(P)-bd_dom_sf"/>
</dbReference>
<dbReference type="InterPro" id="IPR000672">
    <property type="entry name" value="THF_DH/CycHdrlase"/>
</dbReference>
<dbReference type="InterPro" id="IPR020630">
    <property type="entry name" value="THF_DH/CycHdrlase_cat_dom"/>
</dbReference>
<dbReference type="InterPro" id="IPR020867">
    <property type="entry name" value="THF_DH/CycHdrlase_CS"/>
</dbReference>
<dbReference type="InterPro" id="IPR020631">
    <property type="entry name" value="THF_DH/CycHdrlase_NAD-bd_dom"/>
</dbReference>
<dbReference type="NCBIfam" id="NF008058">
    <property type="entry name" value="PRK10792.1"/>
    <property type="match status" value="1"/>
</dbReference>
<dbReference type="NCBIfam" id="NF010783">
    <property type="entry name" value="PRK14186.1"/>
    <property type="match status" value="1"/>
</dbReference>
<dbReference type="PANTHER" id="PTHR48099:SF5">
    <property type="entry name" value="C-1-TETRAHYDROFOLATE SYNTHASE, CYTOPLASMIC"/>
    <property type="match status" value="1"/>
</dbReference>
<dbReference type="PANTHER" id="PTHR48099">
    <property type="entry name" value="C-1-TETRAHYDROFOLATE SYNTHASE, CYTOPLASMIC-RELATED"/>
    <property type="match status" value="1"/>
</dbReference>
<dbReference type="Pfam" id="PF00763">
    <property type="entry name" value="THF_DHG_CYH"/>
    <property type="match status" value="1"/>
</dbReference>
<dbReference type="Pfam" id="PF02882">
    <property type="entry name" value="THF_DHG_CYH_C"/>
    <property type="match status" value="1"/>
</dbReference>
<dbReference type="PRINTS" id="PR00085">
    <property type="entry name" value="THFDHDRGNASE"/>
</dbReference>
<dbReference type="SUPFAM" id="SSF53223">
    <property type="entry name" value="Aminoacid dehydrogenase-like, N-terminal domain"/>
    <property type="match status" value="1"/>
</dbReference>
<dbReference type="SUPFAM" id="SSF51735">
    <property type="entry name" value="NAD(P)-binding Rossmann-fold domains"/>
    <property type="match status" value="1"/>
</dbReference>
<dbReference type="PROSITE" id="PS00767">
    <property type="entry name" value="THF_DHG_CYH_2"/>
    <property type="match status" value="1"/>
</dbReference>
<accession>Q493A0</accession>
<proteinExistence type="inferred from homology"/>
<keyword id="KW-0028">Amino-acid biosynthesis</keyword>
<keyword id="KW-0368">Histidine biosynthesis</keyword>
<keyword id="KW-0378">Hydrolase</keyword>
<keyword id="KW-0486">Methionine biosynthesis</keyword>
<keyword id="KW-0511">Multifunctional enzyme</keyword>
<keyword id="KW-0521">NADP</keyword>
<keyword id="KW-0554">One-carbon metabolism</keyword>
<keyword id="KW-0560">Oxidoreductase</keyword>
<keyword id="KW-0658">Purine biosynthesis</keyword>
<keyword id="KW-1185">Reference proteome</keyword>
<feature type="chain" id="PRO_0000268282" description="Bifunctional protein FolD">
    <location>
        <begin position="1"/>
        <end position="286"/>
    </location>
</feature>
<feature type="binding site" evidence="1">
    <location>
        <begin position="166"/>
        <end position="168"/>
    </location>
    <ligand>
        <name>NADP(+)</name>
        <dbReference type="ChEBI" id="CHEBI:58349"/>
    </ligand>
</feature>
<feature type="binding site" evidence="1">
    <location>
        <position position="232"/>
    </location>
    <ligand>
        <name>NADP(+)</name>
        <dbReference type="ChEBI" id="CHEBI:58349"/>
    </ligand>
</feature>
<organism>
    <name type="scientific">Blochmanniella pennsylvanica (strain BPEN)</name>
    <dbReference type="NCBI Taxonomy" id="291272"/>
    <lineage>
        <taxon>Bacteria</taxon>
        <taxon>Pseudomonadati</taxon>
        <taxon>Pseudomonadota</taxon>
        <taxon>Gammaproteobacteria</taxon>
        <taxon>Enterobacterales</taxon>
        <taxon>Enterobacteriaceae</taxon>
        <taxon>ant endosymbionts</taxon>
        <taxon>Candidatus Blochmanniella</taxon>
    </lineage>
</organism>
<sequence>MIAKIIDGKYVSEKIKQEIAKQVRKNMNSGKRAPGLAMILVGHNPISQIYVTNKKKACEQVGLISFLYTLPITATENEIFQLIETLNNDNRIDGILIQLPLPNKLNKINVLEHIAPDKDVDGFHPYNVGRLCQRSPTLRPCTSRGIITLLEWYNIDMFVLHAVVVGASNIVGRPMTMELLLAGCTVSVTHRFTQNLKIYIENADLLIVAVGQANFIPGSWIKQGAIVIDVGINRLNNGNIVGDVHFSSAYERAAYITPVPGGVGPMTVVTLIQNTLQAYDDHHLVR</sequence>
<comment type="function">
    <text evidence="1">Catalyzes the oxidation of 5,10-methylenetetrahydrofolate to 5,10-methenyltetrahydrofolate and then the hydrolysis of 5,10-methenyltetrahydrofolate to 10-formyltetrahydrofolate.</text>
</comment>
<comment type="catalytic activity">
    <reaction evidence="1">
        <text>(6R)-5,10-methylene-5,6,7,8-tetrahydrofolate + NADP(+) = (6R)-5,10-methenyltetrahydrofolate + NADPH</text>
        <dbReference type="Rhea" id="RHEA:22812"/>
        <dbReference type="ChEBI" id="CHEBI:15636"/>
        <dbReference type="ChEBI" id="CHEBI:57455"/>
        <dbReference type="ChEBI" id="CHEBI:57783"/>
        <dbReference type="ChEBI" id="CHEBI:58349"/>
        <dbReference type="EC" id="1.5.1.5"/>
    </reaction>
</comment>
<comment type="catalytic activity">
    <reaction evidence="1">
        <text>(6R)-5,10-methenyltetrahydrofolate + H2O = (6R)-10-formyltetrahydrofolate + H(+)</text>
        <dbReference type="Rhea" id="RHEA:23700"/>
        <dbReference type="ChEBI" id="CHEBI:15377"/>
        <dbReference type="ChEBI" id="CHEBI:15378"/>
        <dbReference type="ChEBI" id="CHEBI:57455"/>
        <dbReference type="ChEBI" id="CHEBI:195366"/>
        <dbReference type="EC" id="3.5.4.9"/>
    </reaction>
</comment>
<comment type="pathway">
    <text evidence="1">One-carbon metabolism; tetrahydrofolate interconversion.</text>
</comment>
<comment type="subunit">
    <text evidence="1">Homodimer.</text>
</comment>
<comment type="similarity">
    <text evidence="1">Belongs to the tetrahydrofolate dehydrogenase/cyclohydrolase family.</text>
</comment>
<name>FOLD_BLOPB</name>